<keyword id="KW-0269">Exonuclease</keyword>
<keyword id="KW-0378">Hydrolase</keyword>
<keyword id="KW-0540">Nuclease</keyword>
<keyword id="KW-0597">Phosphoprotein</keyword>
<keyword id="KW-1185">Reference proteome</keyword>
<gene>
    <name type="primary">NGL3</name>
    <name type="ordered locus">YML118W</name>
    <name type="ORF">YM7056.08</name>
    <name type="ORF">YM8339.01</name>
</gene>
<organism>
    <name type="scientific">Saccharomyces cerevisiae (strain ATCC 204508 / S288c)</name>
    <name type="common">Baker's yeast</name>
    <dbReference type="NCBI Taxonomy" id="559292"/>
    <lineage>
        <taxon>Eukaryota</taxon>
        <taxon>Fungi</taxon>
        <taxon>Dikarya</taxon>
        <taxon>Ascomycota</taxon>
        <taxon>Saccharomycotina</taxon>
        <taxon>Saccharomycetes</taxon>
        <taxon>Saccharomycetales</taxon>
        <taxon>Saccharomycetaceae</taxon>
        <taxon>Saccharomyces</taxon>
    </lineage>
</organism>
<sequence>MDSQVEGKISPSQKESSSTSGLVSPSEDGPAHQKIHRDQLSVDQIKKIREERAQKRQVRRNSLISQGKDPDFPTPDLQFIERPFLPINHDNSKGLTPATIQVTQDSLDVKIMTYNTLAQTLIRRDFFPESGPALKWHKRSKVLVHELKKYRPDVVSLQEVDYNELNFWQENFHKLGFDVIFKRHEGKTHGLLVAWNNKKFQLDNDWMLDYDNILAGNVISARTRTKNIALIISLYFKGITDSSSRGIIVANTHLFWHPFGVFERLRQSYLVLQKIQEIKACSKYNGWHSLLMGDFNTEPEEPPYLAITKRPLILKGPIRAMVECSLAYRYSKKRNGEESDQDDEECDEKSRGEGHSDQPQNPKPESFTATKEEKALVNQLVALHNSLHVKGVSLYGIGYGKVHPENANGSHGEPGLSNWANTWCGLLDYIFYIEGDHNQDTRQKEPLNAFEGNNNVKIIGYLRMPCAQEMPKHSQPFEGEYASDHISLMCQIRLFFGGEKVHSLK</sequence>
<proteinExistence type="evidence at protein level"/>
<name>NGL3_YEAST</name>
<comment type="miscellaneous">
    <text evidence="2">Present with 414 molecules/cell in log phase SD medium.</text>
</comment>
<comment type="similarity">
    <text evidence="3">Belongs to the CCR4/nocturin family.</text>
</comment>
<evidence type="ECO:0000256" key="1">
    <source>
        <dbReference type="SAM" id="MobiDB-lite"/>
    </source>
</evidence>
<evidence type="ECO:0000269" key="2">
    <source>
    </source>
</evidence>
<evidence type="ECO:0000305" key="3"/>
<evidence type="ECO:0007744" key="4">
    <source>
    </source>
</evidence>
<evidence type="ECO:0007744" key="5">
    <source>
    </source>
</evidence>
<protein>
    <recommendedName>
        <fullName>Probable RNA exonuclease NGL3</fullName>
        <ecNumber>3.1.-.-</ecNumber>
    </recommendedName>
</protein>
<reference key="1">
    <citation type="journal article" date="1997" name="Nature">
        <title>The nucleotide sequence of Saccharomyces cerevisiae chromosome XIII.</title>
        <authorList>
            <person name="Bowman S."/>
            <person name="Churcher C.M."/>
            <person name="Badcock K."/>
            <person name="Brown D."/>
            <person name="Chillingworth T."/>
            <person name="Connor R."/>
            <person name="Dedman K."/>
            <person name="Devlin K."/>
            <person name="Gentles S."/>
            <person name="Hamlin N."/>
            <person name="Hunt S."/>
            <person name="Jagels K."/>
            <person name="Lye G."/>
            <person name="Moule S."/>
            <person name="Odell C."/>
            <person name="Pearson D."/>
            <person name="Rajandream M.A."/>
            <person name="Rice P."/>
            <person name="Skelton J."/>
            <person name="Walsh S.V."/>
            <person name="Whitehead S."/>
            <person name="Barrell B.G."/>
        </authorList>
    </citation>
    <scope>NUCLEOTIDE SEQUENCE [LARGE SCALE GENOMIC DNA]</scope>
    <source>
        <strain>ATCC 204508 / S288c</strain>
    </source>
</reference>
<reference key="2">
    <citation type="journal article" date="2014" name="G3 (Bethesda)">
        <title>The reference genome sequence of Saccharomyces cerevisiae: Then and now.</title>
        <authorList>
            <person name="Engel S.R."/>
            <person name="Dietrich F.S."/>
            <person name="Fisk D.G."/>
            <person name="Binkley G."/>
            <person name="Balakrishnan R."/>
            <person name="Costanzo M.C."/>
            <person name="Dwight S.S."/>
            <person name="Hitz B.C."/>
            <person name="Karra K."/>
            <person name="Nash R.S."/>
            <person name="Weng S."/>
            <person name="Wong E.D."/>
            <person name="Lloyd P."/>
            <person name="Skrzypek M.S."/>
            <person name="Miyasato S.R."/>
            <person name="Simison M."/>
            <person name="Cherry J.M."/>
        </authorList>
    </citation>
    <scope>GENOME REANNOTATION</scope>
    <source>
        <strain>ATCC 204508 / S288c</strain>
    </source>
</reference>
<reference key="3">
    <citation type="journal article" date="2003" name="Nature">
        <title>Global analysis of protein expression in yeast.</title>
        <authorList>
            <person name="Ghaemmaghami S."/>
            <person name="Huh W.-K."/>
            <person name="Bower K."/>
            <person name="Howson R.W."/>
            <person name="Belle A."/>
            <person name="Dephoure N."/>
            <person name="O'Shea E.K."/>
            <person name="Weissman J.S."/>
        </authorList>
    </citation>
    <scope>LEVEL OF PROTEIN EXPRESSION [LARGE SCALE ANALYSIS]</scope>
</reference>
<reference key="4">
    <citation type="journal article" date="2007" name="Proc. Natl. Acad. Sci. U.S.A.">
        <title>Analysis of phosphorylation sites on proteins from Saccharomyces cerevisiae by electron transfer dissociation (ETD) mass spectrometry.</title>
        <authorList>
            <person name="Chi A."/>
            <person name="Huttenhower C."/>
            <person name="Geer L.Y."/>
            <person name="Coon J.J."/>
            <person name="Syka J.E.P."/>
            <person name="Bai D.L."/>
            <person name="Shabanowitz J."/>
            <person name="Burke D.J."/>
            <person name="Troyanskaya O.G."/>
            <person name="Hunt D.F."/>
        </authorList>
    </citation>
    <scope>PHOSPHORYLATION [LARGE SCALE ANALYSIS] AT SER-62</scope>
    <scope>IDENTIFICATION BY MASS SPECTROMETRY [LARGE SCALE ANALYSIS]</scope>
</reference>
<reference key="5">
    <citation type="journal article" date="2008" name="Mol. Cell. Proteomics">
        <title>A multidimensional chromatography technology for in-depth phosphoproteome analysis.</title>
        <authorList>
            <person name="Albuquerque C.P."/>
            <person name="Smolka M.B."/>
            <person name="Payne S.H."/>
            <person name="Bafna V."/>
            <person name="Eng J."/>
            <person name="Zhou H."/>
        </authorList>
    </citation>
    <scope>PHOSPHORYLATION [LARGE SCALE ANALYSIS] AT SER-62</scope>
    <scope>IDENTIFICATION BY MASS SPECTROMETRY [LARGE SCALE ANALYSIS]</scope>
</reference>
<accession>Q03210</accession>
<accession>D6W0G6</accession>
<accession>Q03733</accession>
<feature type="chain" id="PRO_0000218580" description="Probable RNA exonuclease NGL3">
    <location>
        <begin position="1"/>
        <end position="505"/>
    </location>
</feature>
<feature type="region of interest" description="Disordered" evidence="1">
    <location>
        <begin position="1"/>
        <end position="75"/>
    </location>
</feature>
<feature type="region of interest" description="Disordered" evidence="1">
    <location>
        <begin position="334"/>
        <end position="369"/>
    </location>
</feature>
<feature type="compositionally biased region" description="Polar residues" evidence="1">
    <location>
        <begin position="10"/>
        <end position="23"/>
    </location>
</feature>
<feature type="compositionally biased region" description="Basic and acidic residues" evidence="1">
    <location>
        <begin position="36"/>
        <end position="54"/>
    </location>
</feature>
<feature type="compositionally biased region" description="Acidic residues" evidence="1">
    <location>
        <begin position="338"/>
        <end position="347"/>
    </location>
</feature>
<feature type="modified residue" description="Phosphoserine" evidence="4 5">
    <location>
        <position position="62"/>
    </location>
</feature>
<dbReference type="EC" id="3.1.-.-"/>
<dbReference type="EMBL" id="Z49218">
    <property type="protein sequence ID" value="CAA89162.1"/>
    <property type="molecule type" value="Genomic_DNA"/>
</dbReference>
<dbReference type="EMBL" id="Z49210">
    <property type="protein sequence ID" value="CAA89100.1"/>
    <property type="molecule type" value="Genomic_DNA"/>
</dbReference>
<dbReference type="EMBL" id="BK006946">
    <property type="protein sequence ID" value="DAA09780.1"/>
    <property type="molecule type" value="Genomic_DNA"/>
</dbReference>
<dbReference type="PIR" id="S54066">
    <property type="entry name" value="S54066"/>
</dbReference>
<dbReference type="RefSeq" id="NP_013588.1">
    <property type="nucleotide sequence ID" value="NM_001182481.1"/>
</dbReference>
<dbReference type="SMR" id="Q03210"/>
<dbReference type="BioGRID" id="35086">
    <property type="interactions" value="28"/>
</dbReference>
<dbReference type="FunCoup" id="Q03210">
    <property type="interactions" value="366"/>
</dbReference>
<dbReference type="IntAct" id="Q03210">
    <property type="interactions" value="1"/>
</dbReference>
<dbReference type="STRING" id="4932.YML118W"/>
<dbReference type="GlyGen" id="Q03210">
    <property type="glycosylation" value="1 site"/>
</dbReference>
<dbReference type="iPTMnet" id="Q03210"/>
<dbReference type="PaxDb" id="4932-YML118W"/>
<dbReference type="PeptideAtlas" id="Q03210"/>
<dbReference type="EnsemblFungi" id="YML118W_mRNA">
    <property type="protein sequence ID" value="YML118W"/>
    <property type="gene ID" value="YML118W"/>
</dbReference>
<dbReference type="GeneID" id="854921"/>
<dbReference type="KEGG" id="sce:YML118W"/>
<dbReference type="AGR" id="SGD:S000004587"/>
<dbReference type="SGD" id="S000004587">
    <property type="gene designation" value="NGL3"/>
</dbReference>
<dbReference type="VEuPathDB" id="FungiDB:YML118W"/>
<dbReference type="eggNOG" id="KOG2338">
    <property type="taxonomic scope" value="Eukaryota"/>
</dbReference>
<dbReference type="GeneTree" id="ENSGT00940000176796"/>
<dbReference type="HOGENOM" id="CLU_034867_0_0_1"/>
<dbReference type="InParanoid" id="Q03210"/>
<dbReference type="OMA" id="YTHYWKT"/>
<dbReference type="OrthoDB" id="428734at2759"/>
<dbReference type="BioCyc" id="YEAST:G3O-32699-MONOMER"/>
<dbReference type="BioGRID-ORCS" id="854921">
    <property type="hits" value="1 hit in 10 CRISPR screens"/>
</dbReference>
<dbReference type="PRO" id="PR:Q03210"/>
<dbReference type="Proteomes" id="UP000002311">
    <property type="component" value="Chromosome XIII"/>
</dbReference>
<dbReference type="RNAct" id="Q03210">
    <property type="molecule type" value="protein"/>
</dbReference>
<dbReference type="GO" id="GO:0004535">
    <property type="term" value="F:poly(A)-specific ribonuclease activity"/>
    <property type="evidence" value="ECO:0000314"/>
    <property type="project" value="SGD"/>
</dbReference>
<dbReference type="GO" id="GO:0043633">
    <property type="term" value="P:polyadenylation-dependent RNA catabolic process"/>
    <property type="evidence" value="ECO:0000314"/>
    <property type="project" value="SGD"/>
</dbReference>
<dbReference type="Gene3D" id="3.60.10.10">
    <property type="entry name" value="Endonuclease/exonuclease/phosphatase"/>
    <property type="match status" value="1"/>
</dbReference>
<dbReference type="InterPro" id="IPR050410">
    <property type="entry name" value="CCR4/nocturin_mRNA_transcr"/>
</dbReference>
<dbReference type="InterPro" id="IPR036691">
    <property type="entry name" value="Endo/exonu/phosph_ase_sf"/>
</dbReference>
<dbReference type="InterPro" id="IPR005135">
    <property type="entry name" value="Endo/exonuclease/phosphatase"/>
</dbReference>
<dbReference type="PANTHER" id="PTHR12121">
    <property type="entry name" value="CARBON CATABOLITE REPRESSOR PROTEIN 4"/>
    <property type="match status" value="1"/>
</dbReference>
<dbReference type="PANTHER" id="PTHR12121:SF45">
    <property type="entry name" value="NOCTURNIN"/>
    <property type="match status" value="1"/>
</dbReference>
<dbReference type="Pfam" id="PF03372">
    <property type="entry name" value="Exo_endo_phos"/>
    <property type="match status" value="1"/>
</dbReference>
<dbReference type="SUPFAM" id="SSF56219">
    <property type="entry name" value="DNase I-like"/>
    <property type="match status" value="1"/>
</dbReference>